<feature type="chain" id="PRO_0000330486" description="Siroheme synthase 1">
    <location>
        <begin position="1"/>
        <end position="463"/>
    </location>
</feature>
<feature type="region of interest" description="Precorrin-2 dehydrogenase /sirohydrochlorin ferrochelatase" evidence="1">
    <location>
        <begin position="1"/>
        <end position="203"/>
    </location>
</feature>
<feature type="region of interest" description="Uroporphyrinogen-III C-methyltransferase" evidence="1">
    <location>
        <begin position="215"/>
        <end position="463"/>
    </location>
</feature>
<feature type="active site" description="Proton acceptor" evidence="1">
    <location>
        <position position="247"/>
    </location>
</feature>
<feature type="active site" description="Proton donor" evidence="1">
    <location>
        <position position="269"/>
    </location>
</feature>
<feature type="binding site" evidence="1">
    <location>
        <begin position="22"/>
        <end position="23"/>
    </location>
    <ligand>
        <name>NAD(+)</name>
        <dbReference type="ChEBI" id="CHEBI:57540"/>
    </ligand>
</feature>
<feature type="binding site" evidence="1">
    <location>
        <begin position="43"/>
        <end position="44"/>
    </location>
    <ligand>
        <name>NAD(+)</name>
        <dbReference type="ChEBI" id="CHEBI:57540"/>
    </ligand>
</feature>
<feature type="binding site" evidence="1">
    <location>
        <position position="224"/>
    </location>
    <ligand>
        <name>S-adenosyl-L-methionine</name>
        <dbReference type="ChEBI" id="CHEBI:59789"/>
    </ligand>
</feature>
<feature type="binding site" evidence="1">
    <location>
        <begin position="300"/>
        <end position="302"/>
    </location>
    <ligand>
        <name>S-adenosyl-L-methionine</name>
        <dbReference type="ChEBI" id="CHEBI:59789"/>
    </ligand>
</feature>
<feature type="binding site" evidence="1">
    <location>
        <position position="305"/>
    </location>
    <ligand>
        <name>S-adenosyl-L-methionine</name>
        <dbReference type="ChEBI" id="CHEBI:59789"/>
    </ligand>
</feature>
<feature type="binding site" evidence="1">
    <location>
        <begin position="330"/>
        <end position="331"/>
    </location>
    <ligand>
        <name>S-adenosyl-L-methionine</name>
        <dbReference type="ChEBI" id="CHEBI:59789"/>
    </ligand>
</feature>
<feature type="binding site" evidence="1">
    <location>
        <position position="382"/>
    </location>
    <ligand>
        <name>S-adenosyl-L-methionine</name>
        <dbReference type="ChEBI" id="CHEBI:59789"/>
    </ligand>
</feature>
<feature type="binding site" evidence="1">
    <location>
        <position position="411"/>
    </location>
    <ligand>
        <name>S-adenosyl-L-methionine</name>
        <dbReference type="ChEBI" id="CHEBI:59789"/>
    </ligand>
</feature>
<feature type="modified residue" description="Phosphoserine" evidence="1">
    <location>
        <position position="128"/>
    </location>
</feature>
<gene>
    <name evidence="1" type="primary">cysG1</name>
    <name type="ordered locus">AHA_2578</name>
</gene>
<protein>
    <recommendedName>
        <fullName evidence="1">Siroheme synthase 1</fullName>
    </recommendedName>
    <domain>
        <recommendedName>
            <fullName evidence="1">Uroporphyrinogen-III C-methyltransferase 1</fullName>
            <shortName evidence="1">Urogen III methylase 1</shortName>
            <ecNumber evidence="1">2.1.1.107</ecNumber>
        </recommendedName>
        <alternativeName>
            <fullName evidence="1">SUMT 1</fullName>
        </alternativeName>
        <alternativeName>
            <fullName evidence="1">Uroporphyrinogen III methylase 1</fullName>
            <shortName evidence="1">UROM 1</shortName>
        </alternativeName>
    </domain>
    <domain>
        <recommendedName>
            <fullName evidence="1">Precorrin-2 dehydrogenase 1</fullName>
            <ecNumber evidence="1">1.3.1.76</ecNumber>
        </recommendedName>
    </domain>
    <domain>
        <recommendedName>
            <fullName evidence="1">Sirohydrochlorin ferrochelatase 1</fullName>
            <ecNumber evidence="1">4.99.1.4</ecNumber>
        </recommendedName>
    </domain>
</protein>
<reference key="1">
    <citation type="journal article" date="2006" name="J. Bacteriol.">
        <title>Genome sequence of Aeromonas hydrophila ATCC 7966T: jack of all trades.</title>
        <authorList>
            <person name="Seshadri R."/>
            <person name="Joseph S.W."/>
            <person name="Chopra A.K."/>
            <person name="Sha J."/>
            <person name="Shaw J."/>
            <person name="Graf J."/>
            <person name="Haft D.H."/>
            <person name="Wu M."/>
            <person name="Ren Q."/>
            <person name="Rosovitz M.J."/>
            <person name="Madupu R."/>
            <person name="Tallon L."/>
            <person name="Kim M."/>
            <person name="Jin S."/>
            <person name="Vuong H."/>
            <person name="Stine O.C."/>
            <person name="Ali A."/>
            <person name="Horneman A.J."/>
            <person name="Heidelberg J.F."/>
        </authorList>
    </citation>
    <scope>NUCLEOTIDE SEQUENCE [LARGE SCALE GENOMIC DNA]</scope>
    <source>
        <strain>ATCC 7966 / DSM 30187 / BCRC 13018 / CCUG 14551 / JCM 1027 / KCTC 2358 / NCIMB 9240 / NCTC 8049</strain>
    </source>
</reference>
<dbReference type="EC" id="2.1.1.107" evidence="1"/>
<dbReference type="EC" id="1.3.1.76" evidence="1"/>
<dbReference type="EC" id="4.99.1.4" evidence="1"/>
<dbReference type="EMBL" id="CP000462">
    <property type="protein sequence ID" value="ABK39337.1"/>
    <property type="molecule type" value="Genomic_DNA"/>
</dbReference>
<dbReference type="RefSeq" id="WP_011706398.1">
    <property type="nucleotide sequence ID" value="NC_008570.1"/>
</dbReference>
<dbReference type="RefSeq" id="YP_857088.1">
    <property type="nucleotide sequence ID" value="NC_008570.1"/>
</dbReference>
<dbReference type="SMR" id="A0KLD7"/>
<dbReference type="STRING" id="380703.AHA_2578"/>
<dbReference type="EnsemblBacteria" id="ABK39337">
    <property type="protein sequence ID" value="ABK39337"/>
    <property type="gene ID" value="AHA_2578"/>
</dbReference>
<dbReference type="GeneID" id="4490900"/>
<dbReference type="KEGG" id="aha:AHA_2578"/>
<dbReference type="PATRIC" id="fig|380703.7.peg.2577"/>
<dbReference type="eggNOG" id="COG0007">
    <property type="taxonomic scope" value="Bacteria"/>
</dbReference>
<dbReference type="eggNOG" id="COG1648">
    <property type="taxonomic scope" value="Bacteria"/>
</dbReference>
<dbReference type="HOGENOM" id="CLU_011276_2_1_6"/>
<dbReference type="OrthoDB" id="9815856at2"/>
<dbReference type="UniPathway" id="UPA00148">
    <property type="reaction ID" value="UER00211"/>
</dbReference>
<dbReference type="UniPathway" id="UPA00148">
    <property type="reaction ID" value="UER00222"/>
</dbReference>
<dbReference type="UniPathway" id="UPA00262">
    <property type="reaction ID" value="UER00211"/>
</dbReference>
<dbReference type="UniPathway" id="UPA00262">
    <property type="reaction ID" value="UER00222"/>
</dbReference>
<dbReference type="UniPathway" id="UPA00262">
    <property type="reaction ID" value="UER00376"/>
</dbReference>
<dbReference type="Proteomes" id="UP000000756">
    <property type="component" value="Chromosome"/>
</dbReference>
<dbReference type="GO" id="GO:0051287">
    <property type="term" value="F:NAD binding"/>
    <property type="evidence" value="ECO:0007669"/>
    <property type="project" value="InterPro"/>
</dbReference>
<dbReference type="GO" id="GO:0043115">
    <property type="term" value="F:precorrin-2 dehydrogenase activity"/>
    <property type="evidence" value="ECO:0007669"/>
    <property type="project" value="UniProtKB-UniRule"/>
</dbReference>
<dbReference type="GO" id="GO:0051266">
    <property type="term" value="F:sirohydrochlorin ferrochelatase activity"/>
    <property type="evidence" value="ECO:0007669"/>
    <property type="project" value="UniProtKB-EC"/>
</dbReference>
<dbReference type="GO" id="GO:0004851">
    <property type="term" value="F:uroporphyrin-III C-methyltransferase activity"/>
    <property type="evidence" value="ECO:0007669"/>
    <property type="project" value="UniProtKB-UniRule"/>
</dbReference>
<dbReference type="GO" id="GO:0009236">
    <property type="term" value="P:cobalamin biosynthetic process"/>
    <property type="evidence" value="ECO:0007669"/>
    <property type="project" value="UniProtKB-UniRule"/>
</dbReference>
<dbReference type="GO" id="GO:0032259">
    <property type="term" value="P:methylation"/>
    <property type="evidence" value="ECO:0007669"/>
    <property type="project" value="UniProtKB-KW"/>
</dbReference>
<dbReference type="GO" id="GO:0019354">
    <property type="term" value="P:siroheme biosynthetic process"/>
    <property type="evidence" value="ECO:0007669"/>
    <property type="project" value="UniProtKB-UniRule"/>
</dbReference>
<dbReference type="CDD" id="cd11642">
    <property type="entry name" value="SUMT"/>
    <property type="match status" value="1"/>
</dbReference>
<dbReference type="FunFam" id="3.30.160.110:FF:000001">
    <property type="entry name" value="Siroheme synthase"/>
    <property type="match status" value="1"/>
</dbReference>
<dbReference type="FunFam" id="3.30.950.10:FF:000001">
    <property type="entry name" value="Siroheme synthase"/>
    <property type="match status" value="1"/>
</dbReference>
<dbReference type="FunFam" id="3.40.1010.10:FF:000001">
    <property type="entry name" value="Siroheme synthase"/>
    <property type="match status" value="1"/>
</dbReference>
<dbReference type="Gene3D" id="3.40.1010.10">
    <property type="entry name" value="Cobalt-precorrin-4 Transmethylase, Domain 1"/>
    <property type="match status" value="1"/>
</dbReference>
<dbReference type="Gene3D" id="3.30.950.10">
    <property type="entry name" value="Methyltransferase, Cobalt-precorrin-4 Transmethylase, Domain 2"/>
    <property type="match status" value="1"/>
</dbReference>
<dbReference type="Gene3D" id="3.40.50.720">
    <property type="entry name" value="NAD(P)-binding Rossmann-like Domain"/>
    <property type="match status" value="1"/>
</dbReference>
<dbReference type="Gene3D" id="1.10.8.210">
    <property type="entry name" value="Sirohaem synthase, dimerisation domain"/>
    <property type="match status" value="1"/>
</dbReference>
<dbReference type="Gene3D" id="3.30.160.110">
    <property type="entry name" value="Siroheme synthase, domain 2"/>
    <property type="match status" value="1"/>
</dbReference>
<dbReference type="HAMAP" id="MF_01646">
    <property type="entry name" value="Siroheme_synth"/>
    <property type="match status" value="1"/>
</dbReference>
<dbReference type="InterPro" id="IPR000878">
    <property type="entry name" value="4pyrrol_Mease"/>
</dbReference>
<dbReference type="InterPro" id="IPR035996">
    <property type="entry name" value="4pyrrol_Methylase_sf"/>
</dbReference>
<dbReference type="InterPro" id="IPR014777">
    <property type="entry name" value="4pyrrole_Mease_sub1"/>
</dbReference>
<dbReference type="InterPro" id="IPR014776">
    <property type="entry name" value="4pyrrole_Mease_sub2"/>
</dbReference>
<dbReference type="InterPro" id="IPR006366">
    <property type="entry name" value="CobA/CysG_C"/>
</dbReference>
<dbReference type="InterPro" id="IPR036291">
    <property type="entry name" value="NAD(P)-bd_dom_sf"/>
</dbReference>
<dbReference type="InterPro" id="IPR050161">
    <property type="entry name" value="Siro_Cobalamin_biosynth"/>
</dbReference>
<dbReference type="InterPro" id="IPR037115">
    <property type="entry name" value="Sirohaem_synt_dimer_dom_sf"/>
</dbReference>
<dbReference type="InterPro" id="IPR012409">
    <property type="entry name" value="Sirohaem_synth"/>
</dbReference>
<dbReference type="InterPro" id="IPR028281">
    <property type="entry name" value="Sirohaem_synthase_central"/>
</dbReference>
<dbReference type="InterPro" id="IPR019478">
    <property type="entry name" value="Sirohaem_synthase_dimer_dom"/>
</dbReference>
<dbReference type="InterPro" id="IPR006367">
    <property type="entry name" value="Sirohaem_synthase_N"/>
</dbReference>
<dbReference type="InterPro" id="IPR003043">
    <property type="entry name" value="Uropor_MeTrfase_CS"/>
</dbReference>
<dbReference type="NCBIfam" id="TIGR01469">
    <property type="entry name" value="cobA_cysG_Cterm"/>
    <property type="match status" value="1"/>
</dbReference>
<dbReference type="NCBIfam" id="TIGR01470">
    <property type="entry name" value="cysG_Nterm"/>
    <property type="match status" value="1"/>
</dbReference>
<dbReference type="NCBIfam" id="NF004790">
    <property type="entry name" value="PRK06136.1"/>
    <property type="match status" value="1"/>
</dbReference>
<dbReference type="NCBIfam" id="NF007922">
    <property type="entry name" value="PRK10637.1"/>
    <property type="match status" value="1"/>
</dbReference>
<dbReference type="PANTHER" id="PTHR45790:SF1">
    <property type="entry name" value="SIROHEME SYNTHASE"/>
    <property type="match status" value="1"/>
</dbReference>
<dbReference type="PANTHER" id="PTHR45790">
    <property type="entry name" value="SIROHEME SYNTHASE-RELATED"/>
    <property type="match status" value="1"/>
</dbReference>
<dbReference type="Pfam" id="PF10414">
    <property type="entry name" value="CysG_dimeriser"/>
    <property type="match status" value="1"/>
</dbReference>
<dbReference type="Pfam" id="PF13241">
    <property type="entry name" value="NAD_binding_7"/>
    <property type="match status" value="1"/>
</dbReference>
<dbReference type="Pfam" id="PF14824">
    <property type="entry name" value="Sirohm_synth_M"/>
    <property type="match status" value="1"/>
</dbReference>
<dbReference type="Pfam" id="PF00590">
    <property type="entry name" value="TP_methylase"/>
    <property type="match status" value="1"/>
</dbReference>
<dbReference type="PIRSF" id="PIRSF036426">
    <property type="entry name" value="Sirohaem_synth"/>
    <property type="match status" value="1"/>
</dbReference>
<dbReference type="SUPFAM" id="SSF51735">
    <property type="entry name" value="NAD(P)-binding Rossmann-fold domains"/>
    <property type="match status" value="1"/>
</dbReference>
<dbReference type="SUPFAM" id="SSF75615">
    <property type="entry name" value="Siroheme synthase middle domains-like"/>
    <property type="match status" value="1"/>
</dbReference>
<dbReference type="SUPFAM" id="SSF53790">
    <property type="entry name" value="Tetrapyrrole methylase"/>
    <property type="match status" value="1"/>
</dbReference>
<dbReference type="PROSITE" id="PS00840">
    <property type="entry name" value="SUMT_2"/>
    <property type="match status" value="1"/>
</dbReference>
<keyword id="KW-0169">Cobalamin biosynthesis</keyword>
<keyword id="KW-0456">Lyase</keyword>
<keyword id="KW-0489">Methyltransferase</keyword>
<keyword id="KW-0511">Multifunctional enzyme</keyword>
<keyword id="KW-0520">NAD</keyword>
<keyword id="KW-0560">Oxidoreductase</keyword>
<keyword id="KW-0597">Phosphoprotein</keyword>
<keyword id="KW-0627">Porphyrin biosynthesis</keyword>
<keyword id="KW-1185">Reference proteome</keyword>
<keyword id="KW-0949">S-adenosyl-L-methionine</keyword>
<keyword id="KW-0808">Transferase</keyword>
<organism>
    <name type="scientific">Aeromonas hydrophila subsp. hydrophila (strain ATCC 7966 / DSM 30187 / BCRC 13018 / CCUG 14551 / JCM 1027 / KCTC 2358 / NCIMB 9240 / NCTC 8049)</name>
    <dbReference type="NCBI Taxonomy" id="380703"/>
    <lineage>
        <taxon>Bacteria</taxon>
        <taxon>Pseudomonadati</taxon>
        <taxon>Pseudomonadota</taxon>
        <taxon>Gammaproteobacteria</taxon>
        <taxon>Aeromonadales</taxon>
        <taxon>Aeromonadaceae</taxon>
        <taxon>Aeromonas</taxon>
    </lineage>
</organism>
<name>CYSG1_AERHH</name>
<sequence length="463" mass="50392">MDFLPLFCQLQHKPVLIVGGGEVAVRKARLLLDAKARVTINAPHLEPQLMSWAEQGLLTVCAADFHPELLDGKWLVIAATNQPEVNQQVFNEANRRQIFCNVVDSPAHCSAIMPAIIDRSPLMVAISSAGSAPLLSRQLREKIEALLPQHLGQLATLAGKLRERVKAIPDKLARRRFWERLFSHERLACQLARGQQQAAEESVAELLNEPQQSKGSVTLVGAGPGDAGLLTLNGLQQLQQADVVVYDRLVSQEVLAHVRRDAERIFVGKEAGCHCVPQQAINQLLLEQARLGKQVVRLKGGDPFIFGRGGEELETLAEAGIPFSVVPGITAASGCAAYSGIPLTHRDHAQRVQFITGHDKEGNIAQEWPALATPRQTLVFYMGLAHAGRIQDELQTHGLPGHTPVALVEQGTRLQQRVVRGKLQQLAQLATQVESPSLIIIGSVVTLADKLDWYGEANTLAGV</sequence>
<comment type="function">
    <text evidence="1">Multifunctional enzyme that catalyzes the SAM-dependent methylations of uroporphyrinogen III at position C-2 and C-7 to form precorrin-2 via precorrin-1. Then it catalyzes the NAD-dependent ring dehydrogenation of precorrin-2 to yield sirohydrochlorin. Finally, it catalyzes the ferrochelation of sirohydrochlorin to yield siroheme.</text>
</comment>
<comment type="catalytic activity">
    <reaction evidence="1">
        <text>uroporphyrinogen III + 2 S-adenosyl-L-methionine = precorrin-2 + 2 S-adenosyl-L-homocysteine + H(+)</text>
        <dbReference type="Rhea" id="RHEA:32459"/>
        <dbReference type="ChEBI" id="CHEBI:15378"/>
        <dbReference type="ChEBI" id="CHEBI:57308"/>
        <dbReference type="ChEBI" id="CHEBI:57856"/>
        <dbReference type="ChEBI" id="CHEBI:58827"/>
        <dbReference type="ChEBI" id="CHEBI:59789"/>
        <dbReference type="EC" id="2.1.1.107"/>
    </reaction>
</comment>
<comment type="catalytic activity">
    <reaction evidence="1">
        <text>precorrin-2 + NAD(+) = sirohydrochlorin + NADH + 2 H(+)</text>
        <dbReference type="Rhea" id="RHEA:15613"/>
        <dbReference type="ChEBI" id="CHEBI:15378"/>
        <dbReference type="ChEBI" id="CHEBI:57540"/>
        <dbReference type="ChEBI" id="CHEBI:57945"/>
        <dbReference type="ChEBI" id="CHEBI:58351"/>
        <dbReference type="ChEBI" id="CHEBI:58827"/>
        <dbReference type="EC" id="1.3.1.76"/>
    </reaction>
</comment>
<comment type="catalytic activity">
    <reaction evidence="1">
        <text>siroheme + 2 H(+) = sirohydrochlorin + Fe(2+)</text>
        <dbReference type="Rhea" id="RHEA:24360"/>
        <dbReference type="ChEBI" id="CHEBI:15378"/>
        <dbReference type="ChEBI" id="CHEBI:29033"/>
        <dbReference type="ChEBI" id="CHEBI:58351"/>
        <dbReference type="ChEBI" id="CHEBI:60052"/>
        <dbReference type="EC" id="4.99.1.4"/>
    </reaction>
</comment>
<comment type="pathway">
    <text evidence="1">Cofactor biosynthesis; adenosylcobalamin biosynthesis; precorrin-2 from uroporphyrinogen III: step 1/1.</text>
</comment>
<comment type="pathway">
    <text evidence="1">Cofactor biosynthesis; adenosylcobalamin biosynthesis; sirohydrochlorin from precorrin-2: step 1/1.</text>
</comment>
<comment type="pathway">
    <text evidence="1">Porphyrin-containing compound metabolism; siroheme biosynthesis; precorrin-2 from uroporphyrinogen III: step 1/1.</text>
</comment>
<comment type="pathway">
    <text evidence="1">Porphyrin-containing compound metabolism; siroheme biosynthesis; siroheme from sirohydrochlorin: step 1/1.</text>
</comment>
<comment type="pathway">
    <text evidence="1">Porphyrin-containing compound metabolism; siroheme biosynthesis; sirohydrochlorin from precorrin-2: step 1/1.</text>
</comment>
<comment type="similarity">
    <text evidence="1">In the N-terminal section; belongs to the precorrin-2 dehydrogenase / sirohydrochlorin ferrochelatase family.</text>
</comment>
<comment type="similarity">
    <text evidence="1">In the C-terminal section; belongs to the precorrin methyltransferase family.</text>
</comment>
<proteinExistence type="inferred from homology"/>
<accession>A0KLD7</accession>
<evidence type="ECO:0000255" key="1">
    <source>
        <dbReference type="HAMAP-Rule" id="MF_01646"/>
    </source>
</evidence>